<comment type="function">
    <text evidence="1">Cell surface GPI-bound ligand for Eph receptors, a family of receptor tyrosine kinases which are crucial for migration, repulsion and adhesion during neuronal, vascular and epithelial development. Binds promiscuously Eph receptors residing on adjacent cells, leading to contact-dependent bidirectional signaling into neighboring cells. The signaling pathway downstream of the receptor is referred to as forward signaling while the signaling pathway downstream of the ephrin ligand is referred to as reverse signaling. With the EPHA2 receptor may play a role in bone remodeling through regulation of osteoclastogenesis and osteoblastogenesis (By similarity).</text>
</comment>
<comment type="subunit">
    <text evidence="4">Binds to the receptor tyrosine kinases EPHA3, EPHA4 and EPHA5. Interacts with EPHA8; activates EPHA8.</text>
</comment>
<comment type="interaction">
    <interactant intactId="EBI-8603210">
        <id>O43921</id>
    </interactant>
    <interactant intactId="EBI-5773557">
        <id>P54764</id>
        <label>EPHA4</label>
    </interactant>
    <organismsDiffer>false</organismsDiffer>
    <experiments>4</experiments>
</comment>
<comment type="subcellular location">
    <subcellularLocation>
        <location evidence="5">Cell membrane</location>
        <topology evidence="5">Lipid-anchor</topology>
        <topology evidence="5">GPI-anchor</topology>
    </subcellularLocation>
</comment>
<comment type="similarity">
    <text evidence="3">Belongs to the ephrin family.</text>
</comment>
<organism>
    <name type="scientific">Homo sapiens</name>
    <name type="common">Human</name>
    <dbReference type="NCBI Taxonomy" id="9606"/>
    <lineage>
        <taxon>Eukaryota</taxon>
        <taxon>Metazoa</taxon>
        <taxon>Chordata</taxon>
        <taxon>Craniata</taxon>
        <taxon>Vertebrata</taxon>
        <taxon>Euteleostomi</taxon>
        <taxon>Mammalia</taxon>
        <taxon>Eutheria</taxon>
        <taxon>Euarchontoglires</taxon>
        <taxon>Primates</taxon>
        <taxon>Haplorrhini</taxon>
        <taxon>Catarrhini</taxon>
        <taxon>Hominidae</taxon>
        <taxon>Homo</taxon>
    </lineage>
</organism>
<evidence type="ECO:0000250" key="1"/>
<evidence type="ECO:0000255" key="2"/>
<evidence type="ECO:0000255" key="3">
    <source>
        <dbReference type="PROSITE-ProRule" id="PRU00884"/>
    </source>
</evidence>
<evidence type="ECO:0000269" key="4">
    <source>
    </source>
</evidence>
<evidence type="ECO:0000305" key="5"/>
<evidence type="ECO:0007829" key="6">
    <source>
        <dbReference type="PDB" id="2WO3"/>
    </source>
</evidence>
<dbReference type="EMBL" id="U92896">
    <property type="protein sequence ID" value="AAC39577.1"/>
    <property type="molecule type" value="Genomic_DNA"/>
</dbReference>
<dbReference type="EMBL" id="U92893">
    <property type="protein sequence ID" value="AAC39577.1"/>
    <property type="status" value="JOINED"/>
    <property type="molecule type" value="Genomic_DNA"/>
</dbReference>
<dbReference type="EMBL" id="U92894">
    <property type="protein sequence ID" value="AAC39577.1"/>
    <property type="status" value="JOINED"/>
    <property type="molecule type" value="Genomic_DNA"/>
</dbReference>
<dbReference type="EMBL" id="AJ007292">
    <property type="protein sequence ID" value="CAA07435.1"/>
    <property type="molecule type" value="mRNA"/>
</dbReference>
<dbReference type="EMBL" id="AC004258">
    <property type="protein sequence ID" value="AAC04896.1"/>
    <property type="molecule type" value="Genomic_DNA"/>
</dbReference>
<dbReference type="CCDS" id="CCDS12061.1"/>
<dbReference type="PIR" id="JE0322">
    <property type="entry name" value="JE0322"/>
</dbReference>
<dbReference type="RefSeq" id="NP_001396.2">
    <property type="nucleotide sequence ID" value="NM_001405.3"/>
</dbReference>
<dbReference type="PDB" id="2WO3">
    <property type="method" value="X-ray"/>
    <property type="resolution" value="2.35 A"/>
    <property type="chains" value="B=33-173"/>
</dbReference>
<dbReference type="PDBsum" id="2WO3"/>
<dbReference type="SMR" id="O43921"/>
<dbReference type="BioGRID" id="108263">
    <property type="interactions" value="93"/>
</dbReference>
<dbReference type="DIP" id="DIP-48293N"/>
<dbReference type="FunCoup" id="O43921">
    <property type="interactions" value="1161"/>
</dbReference>
<dbReference type="IntAct" id="O43921">
    <property type="interactions" value="65"/>
</dbReference>
<dbReference type="MINT" id="O43921"/>
<dbReference type="STRING" id="9606.ENSP00000215368"/>
<dbReference type="BindingDB" id="O43921"/>
<dbReference type="ChEMBL" id="CHEMBL1795109"/>
<dbReference type="GlyCosmos" id="O43921">
    <property type="glycosylation" value="3 sites, No reported glycans"/>
</dbReference>
<dbReference type="GlyGen" id="O43921">
    <property type="glycosylation" value="3 sites, 3 N-linked glycans (1 site)"/>
</dbReference>
<dbReference type="iPTMnet" id="O43921"/>
<dbReference type="PhosphoSitePlus" id="O43921"/>
<dbReference type="BioMuta" id="EFNA2"/>
<dbReference type="jPOST" id="O43921"/>
<dbReference type="MassIVE" id="O43921"/>
<dbReference type="PaxDb" id="9606-ENSP00000215368"/>
<dbReference type="PeptideAtlas" id="O43921"/>
<dbReference type="ProteomicsDB" id="49238"/>
<dbReference type="Antibodypedia" id="3919">
    <property type="antibodies" value="421 antibodies from 31 providers"/>
</dbReference>
<dbReference type="DNASU" id="1943"/>
<dbReference type="Ensembl" id="ENST00000215368.4">
    <property type="protein sequence ID" value="ENSP00000215368.1"/>
    <property type="gene ID" value="ENSG00000099617.4"/>
</dbReference>
<dbReference type="GeneID" id="1943"/>
<dbReference type="KEGG" id="hsa:1943"/>
<dbReference type="MANE-Select" id="ENST00000215368.4">
    <property type="protein sequence ID" value="ENSP00000215368.1"/>
    <property type="RefSeq nucleotide sequence ID" value="NM_001405.4"/>
    <property type="RefSeq protein sequence ID" value="NP_001396.2"/>
</dbReference>
<dbReference type="UCSC" id="uc002lry.3">
    <property type="organism name" value="human"/>
</dbReference>
<dbReference type="AGR" id="HGNC:3222"/>
<dbReference type="CTD" id="1943"/>
<dbReference type="DisGeNET" id="1943"/>
<dbReference type="GeneCards" id="EFNA2"/>
<dbReference type="HGNC" id="HGNC:3222">
    <property type="gene designation" value="EFNA2"/>
</dbReference>
<dbReference type="HPA" id="ENSG00000099617">
    <property type="expression patterns" value="Group enriched (gallbladder, intestine, liver)"/>
</dbReference>
<dbReference type="MIM" id="602756">
    <property type="type" value="gene"/>
</dbReference>
<dbReference type="neXtProt" id="NX_O43921"/>
<dbReference type="OpenTargets" id="ENSG00000099617"/>
<dbReference type="PharmGKB" id="PA27657"/>
<dbReference type="VEuPathDB" id="HostDB:ENSG00000099617"/>
<dbReference type="eggNOG" id="KOG3858">
    <property type="taxonomic scope" value="Eukaryota"/>
</dbReference>
<dbReference type="GeneTree" id="ENSGT00940000160040"/>
<dbReference type="HOGENOM" id="CLU_081598_3_1_1"/>
<dbReference type="InParanoid" id="O43921"/>
<dbReference type="OMA" id="HMEHYVL"/>
<dbReference type="OrthoDB" id="6250301at2759"/>
<dbReference type="PAN-GO" id="O43921">
    <property type="GO annotations" value="6 GO annotations based on evolutionary models"/>
</dbReference>
<dbReference type="PhylomeDB" id="O43921"/>
<dbReference type="PathwayCommons" id="O43921"/>
<dbReference type="Reactome" id="R-HSA-2682334">
    <property type="pathway name" value="EPH-Ephrin signaling"/>
</dbReference>
<dbReference type="Reactome" id="R-HSA-3928663">
    <property type="pathway name" value="EPHA-mediated growth cone collapse"/>
</dbReference>
<dbReference type="Reactome" id="R-HSA-3928665">
    <property type="pathway name" value="EPH-ephrin mediated repulsion of cells"/>
</dbReference>
<dbReference type="SignaLink" id="O43921"/>
<dbReference type="SIGNOR" id="O43921"/>
<dbReference type="BioGRID-ORCS" id="1943">
    <property type="hits" value="15 hits in 1140 CRISPR screens"/>
</dbReference>
<dbReference type="ChiTaRS" id="EFNA2">
    <property type="organism name" value="human"/>
</dbReference>
<dbReference type="EvolutionaryTrace" id="O43921"/>
<dbReference type="GeneWiki" id="EFNA2"/>
<dbReference type="GenomeRNAi" id="1943"/>
<dbReference type="Pharos" id="O43921">
    <property type="development level" value="Tbio"/>
</dbReference>
<dbReference type="PRO" id="PR:O43921"/>
<dbReference type="Proteomes" id="UP000005640">
    <property type="component" value="Chromosome 19"/>
</dbReference>
<dbReference type="RNAct" id="O43921">
    <property type="molecule type" value="protein"/>
</dbReference>
<dbReference type="Bgee" id="ENSG00000099617">
    <property type="expression patterns" value="Expressed in ileal mucosa and 70 other cell types or tissues"/>
</dbReference>
<dbReference type="GO" id="GO:0031594">
    <property type="term" value="C:neuromuscular junction"/>
    <property type="evidence" value="ECO:0007669"/>
    <property type="project" value="Ensembl"/>
</dbReference>
<dbReference type="GO" id="GO:0043204">
    <property type="term" value="C:perikaryon"/>
    <property type="evidence" value="ECO:0007669"/>
    <property type="project" value="Ensembl"/>
</dbReference>
<dbReference type="GO" id="GO:0005886">
    <property type="term" value="C:plasma membrane"/>
    <property type="evidence" value="ECO:0000318"/>
    <property type="project" value="GO_Central"/>
</dbReference>
<dbReference type="GO" id="GO:0098552">
    <property type="term" value="C:side of membrane"/>
    <property type="evidence" value="ECO:0007669"/>
    <property type="project" value="UniProtKB-KW"/>
</dbReference>
<dbReference type="GO" id="GO:0046875">
    <property type="term" value="F:ephrin receptor binding"/>
    <property type="evidence" value="ECO:0000318"/>
    <property type="project" value="GO_Central"/>
</dbReference>
<dbReference type="GO" id="GO:0007411">
    <property type="term" value="P:axon guidance"/>
    <property type="evidence" value="ECO:0000318"/>
    <property type="project" value="GO_Central"/>
</dbReference>
<dbReference type="GO" id="GO:0046849">
    <property type="term" value="P:bone remodeling"/>
    <property type="evidence" value="ECO:0000250"/>
    <property type="project" value="UniProtKB"/>
</dbReference>
<dbReference type="GO" id="GO:0007267">
    <property type="term" value="P:cell-cell signaling"/>
    <property type="evidence" value="ECO:0000304"/>
    <property type="project" value="ProtInc"/>
</dbReference>
<dbReference type="GO" id="GO:0048013">
    <property type="term" value="P:ephrin receptor signaling pathway"/>
    <property type="evidence" value="ECO:0000250"/>
    <property type="project" value="UniProtKB"/>
</dbReference>
<dbReference type="GO" id="GO:0021772">
    <property type="term" value="P:olfactory bulb development"/>
    <property type="evidence" value="ECO:0007669"/>
    <property type="project" value="Ensembl"/>
</dbReference>
<dbReference type="GO" id="GO:0030316">
    <property type="term" value="P:osteoclast differentiation"/>
    <property type="evidence" value="ECO:0000250"/>
    <property type="project" value="UniProtKB"/>
</dbReference>
<dbReference type="CDD" id="cd10425">
    <property type="entry name" value="Ephrin-A_Ectodomain"/>
    <property type="match status" value="1"/>
</dbReference>
<dbReference type="FunFam" id="2.60.40.420:FF:000005">
    <property type="entry name" value="Ephrin A5"/>
    <property type="match status" value="1"/>
</dbReference>
<dbReference type="Gene3D" id="2.60.40.420">
    <property type="entry name" value="Cupredoxins - blue copper proteins"/>
    <property type="match status" value="1"/>
</dbReference>
<dbReference type="InterPro" id="IPR008972">
    <property type="entry name" value="Cupredoxin"/>
</dbReference>
<dbReference type="InterPro" id="IPR031328">
    <property type="entry name" value="Ephrin"/>
</dbReference>
<dbReference type="InterPro" id="IPR034252">
    <property type="entry name" value="Ephrin-A_Ecto"/>
</dbReference>
<dbReference type="InterPro" id="IPR019765">
    <property type="entry name" value="Ephrin_CS"/>
</dbReference>
<dbReference type="InterPro" id="IPR001799">
    <property type="entry name" value="Ephrin_RBD"/>
</dbReference>
<dbReference type="PANTHER" id="PTHR11304">
    <property type="entry name" value="EPHRIN"/>
    <property type="match status" value="1"/>
</dbReference>
<dbReference type="PANTHER" id="PTHR11304:SF4">
    <property type="entry name" value="EPHRIN-A2"/>
    <property type="match status" value="1"/>
</dbReference>
<dbReference type="Pfam" id="PF00812">
    <property type="entry name" value="Ephrin"/>
    <property type="match status" value="1"/>
</dbReference>
<dbReference type="PRINTS" id="PR01347">
    <property type="entry name" value="EPHRIN"/>
</dbReference>
<dbReference type="SUPFAM" id="SSF49503">
    <property type="entry name" value="Cupredoxins"/>
    <property type="match status" value="1"/>
</dbReference>
<dbReference type="PROSITE" id="PS01299">
    <property type="entry name" value="EPHRIN_RBD_1"/>
    <property type="match status" value="1"/>
</dbReference>
<dbReference type="PROSITE" id="PS51551">
    <property type="entry name" value="EPHRIN_RBD_2"/>
    <property type="match status" value="1"/>
</dbReference>
<reference key="1">
    <citation type="journal article" date="1998" name="Genomics">
        <title>Characterization of the genes for mouse LERK-3/Ephrin-A3 (Epl3), mouse LERK-4/Ephrin-A4 (Epl4), and human LERK-6/Ephrin-A2 (EPLG6): conservation of intron/exon structure.</title>
        <authorList>
            <person name="Cerretti D.P."/>
            <person name="Nelson N."/>
        </authorList>
    </citation>
    <scope>NUCLEOTIDE SEQUENCE [GENOMIC DNA]</scope>
</reference>
<reference key="2">
    <citation type="journal article" date="1998" name="Biochem. Biophys. Res. Commun.">
        <title>Cloning, chromosomal mapping, and tissue expression of the gene encoding the human Eph-family kinase ligand ephrin-A2.</title>
        <authorList>
            <person name="Aasheim H.-C."/>
            <person name="Pedeutour F."/>
            <person name="Grosgeorge J."/>
            <person name="Logtenberg T."/>
        </authorList>
    </citation>
    <scope>NUCLEOTIDE SEQUENCE [MRNA]</scope>
    <source>
        <tissue>Brain</tissue>
    </source>
</reference>
<reference key="3">
    <citation type="journal article" date="2004" name="Nature">
        <title>The DNA sequence and biology of human chromosome 19.</title>
        <authorList>
            <person name="Grimwood J."/>
            <person name="Gordon L.A."/>
            <person name="Olsen A.S."/>
            <person name="Terry A."/>
            <person name="Schmutz J."/>
            <person name="Lamerdin J.E."/>
            <person name="Hellsten U."/>
            <person name="Goodstein D."/>
            <person name="Couronne O."/>
            <person name="Tran-Gyamfi M."/>
            <person name="Aerts A."/>
            <person name="Altherr M."/>
            <person name="Ashworth L."/>
            <person name="Bajorek E."/>
            <person name="Black S."/>
            <person name="Branscomb E."/>
            <person name="Caenepeel S."/>
            <person name="Carrano A.V."/>
            <person name="Caoile C."/>
            <person name="Chan Y.M."/>
            <person name="Christensen M."/>
            <person name="Cleland C.A."/>
            <person name="Copeland A."/>
            <person name="Dalin E."/>
            <person name="Dehal P."/>
            <person name="Denys M."/>
            <person name="Detter J.C."/>
            <person name="Escobar J."/>
            <person name="Flowers D."/>
            <person name="Fotopulos D."/>
            <person name="Garcia C."/>
            <person name="Georgescu A.M."/>
            <person name="Glavina T."/>
            <person name="Gomez M."/>
            <person name="Gonzales E."/>
            <person name="Groza M."/>
            <person name="Hammon N."/>
            <person name="Hawkins T."/>
            <person name="Haydu L."/>
            <person name="Ho I."/>
            <person name="Huang W."/>
            <person name="Israni S."/>
            <person name="Jett J."/>
            <person name="Kadner K."/>
            <person name="Kimball H."/>
            <person name="Kobayashi A."/>
            <person name="Larionov V."/>
            <person name="Leem S.-H."/>
            <person name="Lopez F."/>
            <person name="Lou Y."/>
            <person name="Lowry S."/>
            <person name="Malfatti S."/>
            <person name="Martinez D."/>
            <person name="McCready P.M."/>
            <person name="Medina C."/>
            <person name="Morgan J."/>
            <person name="Nelson K."/>
            <person name="Nolan M."/>
            <person name="Ovcharenko I."/>
            <person name="Pitluck S."/>
            <person name="Pollard M."/>
            <person name="Popkie A.P."/>
            <person name="Predki P."/>
            <person name="Quan G."/>
            <person name="Ramirez L."/>
            <person name="Rash S."/>
            <person name="Retterer J."/>
            <person name="Rodriguez A."/>
            <person name="Rogers S."/>
            <person name="Salamov A."/>
            <person name="Salazar A."/>
            <person name="She X."/>
            <person name="Smith D."/>
            <person name="Slezak T."/>
            <person name="Solovyev V."/>
            <person name="Thayer N."/>
            <person name="Tice H."/>
            <person name="Tsai M."/>
            <person name="Ustaszewska A."/>
            <person name="Vo N."/>
            <person name="Wagner M."/>
            <person name="Wheeler J."/>
            <person name="Wu K."/>
            <person name="Xie G."/>
            <person name="Yang J."/>
            <person name="Dubchak I."/>
            <person name="Furey T.S."/>
            <person name="DeJong P."/>
            <person name="Dickson M."/>
            <person name="Gordon D."/>
            <person name="Eichler E.E."/>
            <person name="Pennacchio L.A."/>
            <person name="Richardson P."/>
            <person name="Stubbs L."/>
            <person name="Rokhsar D.S."/>
            <person name="Myers R.M."/>
            <person name="Rubin E.M."/>
            <person name="Lucas S.M."/>
        </authorList>
    </citation>
    <scope>NUCLEOTIDE SEQUENCE [LARGE SCALE GENOMIC DNA]</scope>
</reference>
<reference key="4">
    <citation type="journal article" date="2009" name="Structure">
        <title>Structural plasticity of EPH receptor A4 facilitates cross-class ephrin signaling.</title>
        <authorList>
            <person name="Bowden T.A."/>
            <person name="Aricescu A.R."/>
            <person name="Nettleship J.E."/>
            <person name="Siebold C."/>
            <person name="Rahman-Huq N."/>
            <person name="Owens R.J."/>
            <person name="Stuart D.I."/>
            <person name="Jones E.Y."/>
        </authorList>
    </citation>
    <scope>X-RAY CRYSTALLOGRAPHY (2.35 ANGSTROMS) OF 33-177 IN COMPLEX WITH EPHA4</scope>
    <scope>DISULFIDE BONDS</scope>
    <scope>SUBUNIT</scope>
</reference>
<keyword id="KW-0002">3D-structure</keyword>
<keyword id="KW-1003">Cell membrane</keyword>
<keyword id="KW-1015">Disulfide bond</keyword>
<keyword id="KW-0325">Glycoprotein</keyword>
<keyword id="KW-0336">GPI-anchor</keyword>
<keyword id="KW-0449">Lipoprotein</keyword>
<keyword id="KW-0472">Membrane</keyword>
<keyword id="KW-1267">Proteomics identification</keyword>
<keyword id="KW-1185">Reference proteome</keyword>
<keyword id="KW-0732">Signal</keyword>
<protein>
    <recommendedName>
        <fullName>Ephrin-A2</fullName>
    </recommendedName>
    <alternativeName>
        <fullName>EPH-related receptor tyrosine kinase ligand 6</fullName>
        <shortName>LERK-6</shortName>
    </alternativeName>
    <alternativeName>
        <fullName>HEK7 ligand</fullName>
        <shortName>HEK7-L</shortName>
    </alternativeName>
</protein>
<sequence>MAPAQRPLLPLLLLLLPLPPPPFARAEDAARANSDRYAVYWNRSNPRFHAGAGDDGGGYTVEVSINDYLDIYCPHYGAPLPPAERMEHYVLYMVNGEGHASCDHRQRGFKRWECNRPAAPGGPLKFSEKFQLFTPFSLGFEFRPGHEYYYISATPPNAVDRPCLRLKVYVRPTNETLYEAPEPIFTSNNSCSSPGGCRLFLSTIPVLWTLLGS</sequence>
<feature type="signal peptide" evidence="2">
    <location>
        <begin position="1"/>
        <end position="24"/>
    </location>
</feature>
<feature type="chain" id="PRO_0000008361" description="Ephrin-A2">
    <location>
        <begin position="25"/>
        <end position="188"/>
    </location>
</feature>
<feature type="propeptide" id="PRO_0000008362" description="Removed in mature form" evidence="2">
    <location>
        <begin position="189"/>
        <end position="213"/>
    </location>
</feature>
<feature type="domain" description="Ephrin RBD" evidence="3">
    <location>
        <begin position="34"/>
        <end position="174"/>
    </location>
</feature>
<feature type="lipid moiety-binding region" description="GPI-anchor amidated asparagine" evidence="2">
    <location>
        <position position="188"/>
    </location>
</feature>
<feature type="glycosylation site" description="N-linked (GlcNAc...) asparagine" evidence="2">
    <location>
        <position position="42"/>
    </location>
</feature>
<feature type="glycosylation site" description="N-linked (GlcNAc...) asparagine" evidence="2">
    <location>
        <position position="174"/>
    </location>
</feature>
<feature type="glycosylation site" description="N-linked (GlcNAc...) asparagine" evidence="2">
    <location>
        <position position="188"/>
    </location>
</feature>
<feature type="disulfide bond" evidence="3 4">
    <location>
        <begin position="73"/>
        <end position="114"/>
    </location>
</feature>
<feature type="disulfide bond" evidence="3 4">
    <location>
        <begin position="102"/>
        <end position="163"/>
    </location>
</feature>
<feature type="sequence conflict" description="In Ref. 2; CAA07435." evidence="5" ref="2">
    <original>R</original>
    <variation>A</variation>
    <location>
        <position position="6"/>
    </location>
</feature>
<feature type="sequence conflict" description="In Ref. 2; CAA07435." evidence="5" ref="2">
    <original>RA</original>
    <variation>PP</variation>
    <location>
        <begin position="25"/>
        <end position="26"/>
    </location>
</feature>
<feature type="sequence conflict" description="In Ref. 2; CAA07435." evidence="5" ref="2">
    <original>AA</original>
    <variation>RR</variation>
    <location>
        <begin position="29"/>
        <end position="30"/>
    </location>
</feature>
<feature type="strand" evidence="6">
    <location>
        <begin position="36"/>
        <end position="40"/>
    </location>
</feature>
<feature type="strand" evidence="6">
    <location>
        <begin position="51"/>
        <end position="53"/>
    </location>
</feature>
<feature type="strand" evidence="6">
    <location>
        <begin position="59"/>
        <end position="63"/>
    </location>
</feature>
<feature type="strand" evidence="6">
    <location>
        <begin position="68"/>
        <end position="72"/>
    </location>
</feature>
<feature type="helix" evidence="6">
    <location>
        <begin position="83"/>
        <end position="85"/>
    </location>
</feature>
<feature type="strand" evidence="6">
    <location>
        <begin position="89"/>
        <end position="94"/>
    </location>
</feature>
<feature type="helix" evidence="6">
    <location>
        <begin position="96"/>
        <end position="101"/>
    </location>
</feature>
<feature type="strand" evidence="6">
    <location>
        <begin position="107"/>
        <end position="114"/>
    </location>
</feature>
<feature type="strand" evidence="6">
    <location>
        <begin position="125"/>
        <end position="129"/>
    </location>
</feature>
<feature type="strand" evidence="6">
    <location>
        <begin position="147"/>
        <end position="153"/>
    </location>
</feature>
<feature type="strand" evidence="6">
    <location>
        <begin position="165"/>
        <end position="170"/>
    </location>
</feature>
<accession>O43921</accession>
<accession>O76020</accession>
<proteinExistence type="evidence at protein level"/>
<gene>
    <name type="primary">EFNA2</name>
    <name type="synonym">EPLG6</name>
    <name type="synonym">LERK6</name>
</gene>
<name>EFNA2_HUMAN</name>